<keyword id="KW-1185">Reference proteome</keyword>
<organism>
    <name type="scientific">Acidianus bottle-shaped virus (isolate Italy/Pozzuoli)</name>
    <name type="common">ABV</name>
    <dbReference type="NCBI Taxonomy" id="654911"/>
    <lineage>
        <taxon>Viruses</taxon>
        <taxon>Viruses incertae sedis</taxon>
        <taxon>Ampullaviridae</taxon>
        <taxon>Bottigliavirus</taxon>
        <taxon>Bottigliavirus ABV</taxon>
    </lineage>
</organism>
<organismHost>
    <name type="scientific">Acidianus convivator</name>
    <dbReference type="NCBI Taxonomy" id="269667"/>
</organismHost>
<name>Y247_ABVP</name>
<protein>
    <recommendedName>
        <fullName>Uncharacterized protein ORF247</fullName>
    </recommendedName>
</protein>
<gene>
    <name type="ORF">ORF247</name>
</gene>
<proteinExistence type="predicted"/>
<feature type="chain" id="PRO_0000384866" description="Uncharacterized protein ORF247">
    <location>
        <begin position="1"/>
        <end position="247"/>
    </location>
</feature>
<sequence length="247" mass="28860">MGYLKELIKRVPELPVCDVISYVYYGIVPYDLRIKNFYFRDYLRSLTGIYINKYQYTTFAQKITGGNHPKITYKGVTIGYDNVEHYVHVPDLIASLILINYSINAYVGGSKVLFWADSMRSASIFYSLADRVRTPFYTWEKNPEFSDNLETILYLIGYSDVIKRNGGVKVTPAEIERNKKFKTYYFLPTFYTAYYLRNKHTFIESPNVILKVYKEIEPELKVPDIPFSKLVKKANELIKDNAEALFD</sequence>
<accession>A4ZU94</accession>
<dbReference type="EMBL" id="EF432053">
    <property type="protein sequence ID" value="ABP73398.1"/>
    <property type="molecule type" value="Genomic_DNA"/>
</dbReference>
<dbReference type="RefSeq" id="YP_001210312.1">
    <property type="nucleotide sequence ID" value="NC_009452.1"/>
</dbReference>
<dbReference type="GeneID" id="5129839"/>
<dbReference type="KEGG" id="vg:5129839"/>
<dbReference type="Proteomes" id="UP000000513">
    <property type="component" value="Segment"/>
</dbReference>
<reference key="1">
    <citation type="journal article" date="2007" name="Virology">
        <title>Genome of the Acidianus bottle-shaped virus and insights into the replication and packaging mechanisms.</title>
        <authorList>
            <person name="Peng X."/>
            <person name="Basta T."/>
            <person name="Haring M."/>
            <person name="Garrett R.A."/>
            <person name="Prangishvili D."/>
        </authorList>
    </citation>
    <scope>NUCLEOTIDE SEQUENCE [GENOMIC DNA]</scope>
</reference>